<reference key="1">
    <citation type="journal article" date="2003" name="Proc. Natl. Acad. Sci. U.S.A.">
        <title>The complete genome sequence of the Arabidopsis and tomato pathogen Pseudomonas syringae pv. tomato DC3000.</title>
        <authorList>
            <person name="Buell C.R."/>
            <person name="Joardar V."/>
            <person name="Lindeberg M."/>
            <person name="Selengut J."/>
            <person name="Paulsen I.T."/>
            <person name="Gwinn M.L."/>
            <person name="Dodson R.J."/>
            <person name="DeBoy R.T."/>
            <person name="Durkin A.S."/>
            <person name="Kolonay J.F."/>
            <person name="Madupu R."/>
            <person name="Daugherty S.C."/>
            <person name="Brinkac L.M."/>
            <person name="Beanan M.J."/>
            <person name="Haft D.H."/>
            <person name="Nelson W.C."/>
            <person name="Davidsen T.M."/>
            <person name="Zafar N."/>
            <person name="Zhou L."/>
            <person name="Liu J."/>
            <person name="Yuan Q."/>
            <person name="Khouri H.M."/>
            <person name="Fedorova N.B."/>
            <person name="Tran B."/>
            <person name="Russell D."/>
            <person name="Berry K.J."/>
            <person name="Utterback T.R."/>
            <person name="Van Aken S.E."/>
            <person name="Feldblyum T.V."/>
            <person name="D'Ascenzo M."/>
            <person name="Deng W.-L."/>
            <person name="Ramos A.R."/>
            <person name="Alfano J.R."/>
            <person name="Cartinhour S."/>
            <person name="Chatterjee A.K."/>
            <person name="Delaney T.P."/>
            <person name="Lazarowitz S.G."/>
            <person name="Martin G.B."/>
            <person name="Schneider D.J."/>
            <person name="Tang X."/>
            <person name="Bender C.L."/>
            <person name="White O."/>
            <person name="Fraser C.M."/>
            <person name="Collmer A."/>
        </authorList>
    </citation>
    <scope>NUCLEOTIDE SEQUENCE [LARGE SCALE GENOMIC DNA]</scope>
    <source>
        <strain>ATCC BAA-871 / DC3000</strain>
    </source>
</reference>
<name>RLMKL_PSESM</name>
<comment type="function">
    <text evidence="1">Specifically methylates the guanine in position 2445 (m2G2445) and the guanine in position 2069 (m7G2069) of 23S rRNA.</text>
</comment>
<comment type="catalytic activity">
    <reaction evidence="1">
        <text>guanosine(2445) in 23S rRNA + S-adenosyl-L-methionine = N(2)-methylguanosine(2445) in 23S rRNA + S-adenosyl-L-homocysteine + H(+)</text>
        <dbReference type="Rhea" id="RHEA:42740"/>
        <dbReference type="Rhea" id="RHEA-COMP:10215"/>
        <dbReference type="Rhea" id="RHEA-COMP:10216"/>
        <dbReference type="ChEBI" id="CHEBI:15378"/>
        <dbReference type="ChEBI" id="CHEBI:57856"/>
        <dbReference type="ChEBI" id="CHEBI:59789"/>
        <dbReference type="ChEBI" id="CHEBI:74269"/>
        <dbReference type="ChEBI" id="CHEBI:74481"/>
        <dbReference type="EC" id="2.1.1.173"/>
    </reaction>
</comment>
<comment type="catalytic activity">
    <reaction evidence="1">
        <text>guanosine(2069) in 23S rRNA + S-adenosyl-L-methionine = N(2)-methylguanosine(2069) in 23S rRNA + S-adenosyl-L-homocysteine + H(+)</text>
        <dbReference type="Rhea" id="RHEA:43772"/>
        <dbReference type="Rhea" id="RHEA-COMP:10688"/>
        <dbReference type="Rhea" id="RHEA-COMP:10689"/>
        <dbReference type="ChEBI" id="CHEBI:15378"/>
        <dbReference type="ChEBI" id="CHEBI:57856"/>
        <dbReference type="ChEBI" id="CHEBI:59789"/>
        <dbReference type="ChEBI" id="CHEBI:74269"/>
        <dbReference type="ChEBI" id="CHEBI:74481"/>
        <dbReference type="EC" id="2.1.1.264"/>
    </reaction>
</comment>
<comment type="subcellular location">
    <subcellularLocation>
        <location evidence="1">Cytoplasm</location>
    </subcellularLocation>
</comment>
<comment type="similarity">
    <text evidence="1">Belongs to the methyltransferase superfamily. RlmKL family.</text>
</comment>
<comment type="sequence caution" evidence="2">
    <conflict type="erroneous initiation">
        <sequence resource="EMBL-CDS" id="AAO55825"/>
    </conflict>
    <text>Extended N-terminus.</text>
</comment>
<proteinExistence type="inferred from homology"/>
<evidence type="ECO:0000255" key="1">
    <source>
        <dbReference type="HAMAP-Rule" id="MF_01858"/>
    </source>
</evidence>
<evidence type="ECO:0000305" key="2"/>
<organism>
    <name type="scientific">Pseudomonas syringae pv. tomato (strain ATCC BAA-871 / DC3000)</name>
    <dbReference type="NCBI Taxonomy" id="223283"/>
    <lineage>
        <taxon>Bacteria</taxon>
        <taxon>Pseudomonadati</taxon>
        <taxon>Pseudomonadota</taxon>
        <taxon>Gammaproteobacteria</taxon>
        <taxon>Pseudomonadales</taxon>
        <taxon>Pseudomonadaceae</taxon>
        <taxon>Pseudomonas</taxon>
    </lineage>
</organism>
<accession>Q883N9</accession>
<gene>
    <name evidence="1" type="primary">rlmL</name>
    <name type="ordered locus">PSPTO_2311</name>
</gene>
<feature type="chain" id="PRO_0000366798" description="Ribosomal RNA large subunit methyltransferase K/L">
    <location>
        <begin position="1"/>
        <end position="750"/>
    </location>
</feature>
<feature type="domain" description="THUMP" evidence="1">
    <location>
        <begin position="46"/>
        <end position="157"/>
    </location>
</feature>
<dbReference type="EC" id="2.1.1.173" evidence="1"/>
<dbReference type="EC" id="2.1.1.264" evidence="1"/>
<dbReference type="EMBL" id="AE016853">
    <property type="protein sequence ID" value="AAO55825.1"/>
    <property type="status" value="ALT_INIT"/>
    <property type="molecule type" value="Genomic_DNA"/>
</dbReference>
<dbReference type="RefSeq" id="NP_792130.3">
    <property type="nucleotide sequence ID" value="NC_004578.1"/>
</dbReference>
<dbReference type="SMR" id="Q883N9"/>
<dbReference type="STRING" id="223283.PSPTO_2311"/>
<dbReference type="KEGG" id="pst:PSPTO_2311"/>
<dbReference type="PATRIC" id="fig|223283.9.peg.2347"/>
<dbReference type="eggNOG" id="COG0116">
    <property type="taxonomic scope" value="Bacteria"/>
</dbReference>
<dbReference type="eggNOG" id="COG1092">
    <property type="taxonomic scope" value="Bacteria"/>
</dbReference>
<dbReference type="HOGENOM" id="CLU_014042_2_0_6"/>
<dbReference type="OrthoDB" id="9809404at2"/>
<dbReference type="Proteomes" id="UP000002515">
    <property type="component" value="Chromosome"/>
</dbReference>
<dbReference type="GO" id="GO:0005737">
    <property type="term" value="C:cytoplasm"/>
    <property type="evidence" value="ECO:0007669"/>
    <property type="project" value="UniProtKB-SubCell"/>
</dbReference>
<dbReference type="GO" id="GO:0052915">
    <property type="term" value="F:23S rRNA (guanine(2445)-N(2))-methyltransferase activity"/>
    <property type="evidence" value="ECO:0007669"/>
    <property type="project" value="UniProtKB-UniRule"/>
</dbReference>
<dbReference type="GO" id="GO:0003723">
    <property type="term" value="F:RNA binding"/>
    <property type="evidence" value="ECO:0007669"/>
    <property type="project" value="UniProtKB-KW"/>
</dbReference>
<dbReference type="GO" id="GO:0070043">
    <property type="term" value="F:rRNA (guanine-N7-)-methyltransferase activity"/>
    <property type="evidence" value="ECO:0007669"/>
    <property type="project" value="UniProtKB-UniRule"/>
</dbReference>
<dbReference type="CDD" id="cd02440">
    <property type="entry name" value="AdoMet_MTases"/>
    <property type="match status" value="1"/>
</dbReference>
<dbReference type="CDD" id="cd11715">
    <property type="entry name" value="THUMP_AdoMetMT"/>
    <property type="match status" value="1"/>
</dbReference>
<dbReference type="Gene3D" id="3.30.2130.30">
    <property type="match status" value="1"/>
</dbReference>
<dbReference type="Gene3D" id="3.30.750.80">
    <property type="entry name" value="RNA methyltransferase domain (HRMD) like"/>
    <property type="match status" value="1"/>
</dbReference>
<dbReference type="Gene3D" id="3.40.50.150">
    <property type="entry name" value="Vaccinia Virus protein VP39"/>
    <property type="match status" value="2"/>
</dbReference>
<dbReference type="HAMAP" id="MF_01858">
    <property type="entry name" value="23SrRNA_methyltr_KL"/>
    <property type="match status" value="1"/>
</dbReference>
<dbReference type="InterPro" id="IPR017244">
    <property type="entry name" value="23SrRNA_methyltr_KL"/>
</dbReference>
<dbReference type="InterPro" id="IPR002052">
    <property type="entry name" value="DNA_methylase_N6_adenine_CS"/>
</dbReference>
<dbReference type="InterPro" id="IPR000241">
    <property type="entry name" value="RlmKL-like_Mtase"/>
</dbReference>
<dbReference type="InterPro" id="IPR054170">
    <property type="entry name" value="RlmL_1st"/>
</dbReference>
<dbReference type="InterPro" id="IPR019614">
    <property type="entry name" value="SAM-dep_methyl-trfase"/>
</dbReference>
<dbReference type="InterPro" id="IPR029063">
    <property type="entry name" value="SAM-dependent_MTases_sf"/>
</dbReference>
<dbReference type="InterPro" id="IPR004114">
    <property type="entry name" value="THUMP_dom"/>
</dbReference>
<dbReference type="NCBIfam" id="NF008748">
    <property type="entry name" value="PRK11783.1"/>
    <property type="match status" value="1"/>
</dbReference>
<dbReference type="PANTHER" id="PTHR47313">
    <property type="entry name" value="RIBOSOMAL RNA LARGE SUBUNIT METHYLTRANSFERASE K/L"/>
    <property type="match status" value="1"/>
</dbReference>
<dbReference type="PANTHER" id="PTHR47313:SF1">
    <property type="entry name" value="RIBOSOMAL RNA LARGE SUBUNIT METHYLTRANSFERASE K_L"/>
    <property type="match status" value="1"/>
</dbReference>
<dbReference type="Pfam" id="PF10672">
    <property type="entry name" value="Methyltrans_SAM"/>
    <property type="match status" value="1"/>
</dbReference>
<dbReference type="Pfam" id="PF22020">
    <property type="entry name" value="RlmL_1st"/>
    <property type="match status" value="1"/>
</dbReference>
<dbReference type="Pfam" id="PF02926">
    <property type="entry name" value="THUMP"/>
    <property type="match status" value="1"/>
</dbReference>
<dbReference type="Pfam" id="PF01170">
    <property type="entry name" value="UPF0020"/>
    <property type="match status" value="1"/>
</dbReference>
<dbReference type="PIRSF" id="PIRSF037618">
    <property type="entry name" value="RNA_Mtase_bacteria_prd"/>
    <property type="match status" value="1"/>
</dbReference>
<dbReference type="SMART" id="SM00981">
    <property type="entry name" value="THUMP"/>
    <property type="match status" value="1"/>
</dbReference>
<dbReference type="SUPFAM" id="SSF53335">
    <property type="entry name" value="S-adenosyl-L-methionine-dependent methyltransferases"/>
    <property type="match status" value="2"/>
</dbReference>
<dbReference type="PROSITE" id="PS51165">
    <property type="entry name" value="THUMP"/>
    <property type="match status" value="1"/>
</dbReference>
<protein>
    <recommendedName>
        <fullName evidence="1">Ribosomal RNA large subunit methyltransferase K/L</fullName>
    </recommendedName>
    <domain>
        <recommendedName>
            <fullName evidence="1">23S rRNA m2G2445 methyltransferase</fullName>
            <ecNumber evidence="1">2.1.1.173</ecNumber>
        </recommendedName>
        <alternativeName>
            <fullName evidence="1">rRNA (guanine-N(2)-)-methyltransferase RlmL</fullName>
        </alternativeName>
    </domain>
    <domain>
        <recommendedName>
            <fullName evidence="1">23S rRNA m7G2069 methyltransferase</fullName>
            <ecNumber evidence="1">2.1.1.264</ecNumber>
        </recommendedName>
        <alternativeName>
            <fullName evidence="1">rRNA (guanine-N(7)-)-methyltransferase RlmK</fullName>
        </alternativeName>
    </domain>
</protein>
<keyword id="KW-0963">Cytoplasm</keyword>
<keyword id="KW-0489">Methyltransferase</keyword>
<keyword id="KW-1185">Reference proteome</keyword>
<keyword id="KW-0694">RNA-binding</keyword>
<keyword id="KW-0698">rRNA processing</keyword>
<keyword id="KW-0949">S-adenosyl-L-methionine</keyword>
<keyword id="KW-0808">Transferase</keyword>
<sequence>MSDRYELFLTCPKGLEGLLAEEATALGLQETREHTSAIRGSADMETAYRLCLWSRLANRVLLVLKRFPMKDAEDLYHGVLDVEWHDHLEPEGTIAVEFSGHGSGIDNTHFGALKVKDAIVDKLRTPEGERPSVDKINPDLRVHLRLDRGEAILSLDLSGHSLHQRGYRLQQGAAPLKENLAAAILIRAGWPRIAAEGGALADPMCGVGTFLVEAGMIAADIAPNIKRERWGFSAWLGHVPTLWRKLHDEALARAEAGLAKTPSWIRGYEADPRLIQPGRNNIERAGLSDWIKVYQGEVATFEPRPDQNQKGLVICNPPYGERLGDEASLLYLYQNLGERLRQACLNWEAAVFTGAPDLGKRMGIRSHKQYSFWNGALPCKLLLIKVTPDQFVTGERRTPEQRQVERENPVEVEVVERKLNKNGNPIKPEPVVVEQARLSEGGQMFANRLQKNLKLLGKWVRREGIDCYRVYDADMPEYSLAIDLYHDWVHVQEYAAPKSIDPEKASARLFDALAAIPQALNIDKSRVVIKRRERQSGTKQYERQSAQGQFLEVSEGGVKLLVNLTDYLDTGLFLDHRPMRMRIQREAAGKRFLNLYAYTATASVHAAKGGARSTTSVDLSRTYLDWARRNLSLNGFSDKNRLEQGDVMAWLQANRDEYDLIFIDPPTFSNSKRMEGIFDVQRDQVELIDLAMARLAPGGVLYFSNNFRKFVLDENLGQRYAVEDITAQTIDPDFARNGKIHRAWKITARA</sequence>